<protein>
    <recommendedName>
        <fullName evidence="1">Small ribosomal subunit protein uS3</fullName>
    </recommendedName>
    <alternativeName>
        <fullName evidence="2">30S ribosomal protein S3</fullName>
    </alternativeName>
</protein>
<evidence type="ECO:0000255" key="1">
    <source>
        <dbReference type="HAMAP-Rule" id="MF_01309"/>
    </source>
</evidence>
<evidence type="ECO:0000305" key="2"/>
<reference key="1">
    <citation type="submission" date="2006-12" db="EMBL/GenBank/DDBJ databases">
        <title>Complete sequence of Pyrobaculum islandicum DSM 4184.</title>
        <authorList>
            <person name="Copeland A."/>
            <person name="Lucas S."/>
            <person name="Lapidus A."/>
            <person name="Barry K."/>
            <person name="Detter J.C."/>
            <person name="Glavina del Rio T."/>
            <person name="Dalin E."/>
            <person name="Tice H."/>
            <person name="Pitluck S."/>
            <person name="Meincke L."/>
            <person name="Brettin T."/>
            <person name="Bruce D."/>
            <person name="Han C."/>
            <person name="Tapia R."/>
            <person name="Gilna P."/>
            <person name="Schmutz J."/>
            <person name="Larimer F."/>
            <person name="Land M."/>
            <person name="Hauser L."/>
            <person name="Kyrpides N."/>
            <person name="Mikhailova N."/>
            <person name="Cozen A.E."/>
            <person name="Fitz-Gibbon S.T."/>
            <person name="House C.H."/>
            <person name="Saltikov C."/>
            <person name="Lowe T."/>
            <person name="Richardson P."/>
        </authorList>
    </citation>
    <scope>NUCLEOTIDE SEQUENCE [LARGE SCALE GENOMIC DNA]</scope>
    <source>
        <strain>DSM 4184 / JCM 9189 / GEO3</strain>
    </source>
</reference>
<organism>
    <name type="scientific">Pyrobaculum islandicum (strain DSM 4184 / JCM 9189 / GEO3)</name>
    <dbReference type="NCBI Taxonomy" id="384616"/>
    <lineage>
        <taxon>Archaea</taxon>
        <taxon>Thermoproteota</taxon>
        <taxon>Thermoprotei</taxon>
        <taxon>Thermoproteales</taxon>
        <taxon>Thermoproteaceae</taxon>
        <taxon>Pyrobaculum</taxon>
    </lineage>
</organism>
<sequence length="217" mass="24833">MSAVQRRLPVYKKILEENKKKWMIKEFLEYKLSKYGYIDSEILKTPLGTRIVIYAERPSRIIGKKGVIVKEISNILVNKLGVENPQIDVIDVSKIEAPEMFPKVIAYRIANAMAKGVRFRRVMFVAVRQLMEAGAKGFEIVVSGKLSTERARFEKLTYGKLYKIGYDAKNRVRRAVVHVLLKPGIYGIEVRIAPASLQYSDEYKIKPPVKPETTSQQ</sequence>
<feature type="chain" id="PRO_0000293930" description="Small ribosomal subunit protein uS3">
    <location>
        <begin position="1"/>
        <end position="217"/>
    </location>
</feature>
<feature type="domain" description="KH type-2" evidence="1">
    <location>
        <begin position="24"/>
        <end position="93"/>
    </location>
</feature>
<dbReference type="EMBL" id="CP000504">
    <property type="protein sequence ID" value="ABL88880.1"/>
    <property type="molecule type" value="Genomic_DNA"/>
</dbReference>
<dbReference type="RefSeq" id="WP_011763455.1">
    <property type="nucleotide sequence ID" value="NC_008701.1"/>
</dbReference>
<dbReference type="SMR" id="A1RV98"/>
<dbReference type="STRING" id="384616.Pisl_1729"/>
<dbReference type="GeneID" id="4617487"/>
<dbReference type="KEGG" id="pis:Pisl_1729"/>
<dbReference type="eggNOG" id="arCOG04097">
    <property type="taxonomic scope" value="Archaea"/>
</dbReference>
<dbReference type="HOGENOM" id="CLU_058591_1_1_2"/>
<dbReference type="OrthoDB" id="9126at2157"/>
<dbReference type="Proteomes" id="UP000002595">
    <property type="component" value="Chromosome"/>
</dbReference>
<dbReference type="GO" id="GO:0022627">
    <property type="term" value="C:cytosolic small ribosomal subunit"/>
    <property type="evidence" value="ECO:0007669"/>
    <property type="project" value="TreeGrafter"/>
</dbReference>
<dbReference type="GO" id="GO:0019843">
    <property type="term" value="F:rRNA binding"/>
    <property type="evidence" value="ECO:0007669"/>
    <property type="project" value="UniProtKB-UniRule"/>
</dbReference>
<dbReference type="GO" id="GO:0003735">
    <property type="term" value="F:structural constituent of ribosome"/>
    <property type="evidence" value="ECO:0007669"/>
    <property type="project" value="InterPro"/>
</dbReference>
<dbReference type="GO" id="GO:0006412">
    <property type="term" value="P:translation"/>
    <property type="evidence" value="ECO:0007669"/>
    <property type="project" value="UniProtKB-UniRule"/>
</dbReference>
<dbReference type="CDD" id="cd02411">
    <property type="entry name" value="KH-II_30S_S3_arch"/>
    <property type="match status" value="1"/>
</dbReference>
<dbReference type="FunFam" id="3.30.300.20:FF:000001">
    <property type="entry name" value="30S ribosomal protein S3"/>
    <property type="match status" value="1"/>
</dbReference>
<dbReference type="Gene3D" id="3.30.300.20">
    <property type="match status" value="1"/>
</dbReference>
<dbReference type="Gene3D" id="3.30.1140.32">
    <property type="entry name" value="Ribosomal protein S3, C-terminal domain"/>
    <property type="match status" value="1"/>
</dbReference>
<dbReference type="HAMAP" id="MF_01309_A">
    <property type="entry name" value="Ribosomal_uS3_A"/>
    <property type="match status" value="1"/>
</dbReference>
<dbReference type="InterPro" id="IPR015946">
    <property type="entry name" value="KH_dom-like_a/b"/>
</dbReference>
<dbReference type="InterPro" id="IPR004044">
    <property type="entry name" value="KH_dom_type_2"/>
</dbReference>
<dbReference type="InterPro" id="IPR009019">
    <property type="entry name" value="KH_sf_prok-type"/>
</dbReference>
<dbReference type="InterPro" id="IPR036419">
    <property type="entry name" value="Ribosomal_S3_C_sf"/>
</dbReference>
<dbReference type="InterPro" id="IPR027488">
    <property type="entry name" value="Ribosomal_uS3_arc"/>
</dbReference>
<dbReference type="InterPro" id="IPR001351">
    <property type="entry name" value="Ribosomal_uS3_C"/>
</dbReference>
<dbReference type="InterPro" id="IPR005703">
    <property type="entry name" value="Ribosomal_uS3_euk/arc"/>
</dbReference>
<dbReference type="NCBIfam" id="NF003219">
    <property type="entry name" value="PRK04191.1"/>
    <property type="match status" value="1"/>
</dbReference>
<dbReference type="NCBIfam" id="TIGR01008">
    <property type="entry name" value="uS3_euk_arch"/>
    <property type="match status" value="1"/>
</dbReference>
<dbReference type="PANTHER" id="PTHR11760">
    <property type="entry name" value="30S/40S RIBOSOMAL PROTEIN S3"/>
    <property type="match status" value="1"/>
</dbReference>
<dbReference type="PANTHER" id="PTHR11760:SF32">
    <property type="entry name" value="SMALL RIBOSOMAL SUBUNIT PROTEIN US3"/>
    <property type="match status" value="1"/>
</dbReference>
<dbReference type="Pfam" id="PF07650">
    <property type="entry name" value="KH_2"/>
    <property type="match status" value="1"/>
</dbReference>
<dbReference type="Pfam" id="PF00189">
    <property type="entry name" value="Ribosomal_S3_C"/>
    <property type="match status" value="1"/>
</dbReference>
<dbReference type="SUPFAM" id="SSF54814">
    <property type="entry name" value="Prokaryotic type KH domain (KH-domain type II)"/>
    <property type="match status" value="1"/>
</dbReference>
<dbReference type="SUPFAM" id="SSF54821">
    <property type="entry name" value="Ribosomal protein S3 C-terminal domain"/>
    <property type="match status" value="1"/>
</dbReference>
<dbReference type="PROSITE" id="PS50823">
    <property type="entry name" value="KH_TYPE_2"/>
    <property type="match status" value="1"/>
</dbReference>
<proteinExistence type="inferred from homology"/>
<accession>A1RV98</accession>
<name>RS3_PYRIL</name>
<gene>
    <name evidence="1" type="primary">rps3</name>
    <name type="ordered locus">Pisl_1729</name>
</gene>
<comment type="function">
    <text evidence="1">Binds the lower part of the 30S subunit head.</text>
</comment>
<comment type="subunit">
    <text evidence="1">Part of the 30S ribosomal subunit.</text>
</comment>
<comment type="similarity">
    <text evidence="1">Belongs to the universal ribosomal protein uS3 family.</text>
</comment>
<keyword id="KW-0687">Ribonucleoprotein</keyword>
<keyword id="KW-0689">Ribosomal protein</keyword>
<keyword id="KW-0694">RNA-binding</keyword>
<keyword id="KW-0699">rRNA-binding</keyword>